<dbReference type="EC" id="2.7.7.48"/>
<dbReference type="EC" id="3.6.4.13"/>
<dbReference type="EMBL" id="X15342">
    <property type="protein sequence ID" value="CAA33393.1"/>
    <property type="molecule type" value="Genomic_RNA"/>
</dbReference>
<dbReference type="GO" id="GO:0005524">
    <property type="term" value="F:ATP binding"/>
    <property type="evidence" value="ECO:0007669"/>
    <property type="project" value="UniProtKB-KW"/>
</dbReference>
<dbReference type="GO" id="GO:0016887">
    <property type="term" value="F:ATP hydrolysis activity"/>
    <property type="evidence" value="ECO:0007669"/>
    <property type="project" value="RHEA"/>
</dbReference>
<dbReference type="GO" id="GO:0003724">
    <property type="term" value="F:RNA helicase activity"/>
    <property type="evidence" value="ECO:0007669"/>
    <property type="project" value="UniProtKB-EC"/>
</dbReference>
<dbReference type="GO" id="GO:0003968">
    <property type="term" value="F:RNA-directed RNA polymerase activity"/>
    <property type="evidence" value="ECO:0007669"/>
    <property type="project" value="UniProtKB-KW"/>
</dbReference>
<dbReference type="InterPro" id="IPR043502">
    <property type="entry name" value="DNA/RNA_pol_sf"/>
</dbReference>
<dbReference type="SUPFAM" id="SSF56672">
    <property type="entry name" value="DNA/RNA polymerases"/>
    <property type="match status" value="1"/>
</dbReference>
<proteinExistence type="inferred from homology"/>
<organismHost>
    <name type="scientific">Lilium formosanum</name>
    <dbReference type="NCBI Taxonomy" id="63788"/>
</organismHost>
<comment type="function">
    <text evidence="1">RNA replication. The central part of this protein possibly functions as an ATP-binding helicase (Probable).</text>
</comment>
<comment type="catalytic activity">
    <reaction>
        <text>RNA(n) + a ribonucleoside 5'-triphosphate = RNA(n+1) + diphosphate</text>
        <dbReference type="Rhea" id="RHEA:21248"/>
        <dbReference type="Rhea" id="RHEA-COMP:14527"/>
        <dbReference type="Rhea" id="RHEA-COMP:17342"/>
        <dbReference type="ChEBI" id="CHEBI:33019"/>
        <dbReference type="ChEBI" id="CHEBI:61557"/>
        <dbReference type="ChEBI" id="CHEBI:140395"/>
        <dbReference type="EC" id="2.7.7.48"/>
    </reaction>
</comment>
<comment type="catalytic activity">
    <reaction>
        <text>ATP + H2O = ADP + phosphate + H(+)</text>
        <dbReference type="Rhea" id="RHEA:13065"/>
        <dbReference type="ChEBI" id="CHEBI:15377"/>
        <dbReference type="ChEBI" id="CHEBI:15378"/>
        <dbReference type="ChEBI" id="CHEBI:30616"/>
        <dbReference type="ChEBI" id="CHEBI:43474"/>
        <dbReference type="ChEBI" id="CHEBI:456216"/>
        <dbReference type="EC" id="3.6.4.13"/>
    </reaction>
</comment>
<comment type="similarity">
    <text evidence="1">Belongs to the potexvirus/carlavirus RNA replication protein family.</text>
</comment>
<keyword id="KW-0067">ATP-binding</keyword>
<keyword id="KW-0347">Helicase</keyword>
<keyword id="KW-0378">Hydrolase</keyword>
<keyword id="KW-0511">Multifunctional enzyme</keyword>
<keyword id="KW-0547">Nucleotide-binding</keyword>
<keyword id="KW-0548">Nucleotidyltransferase</keyword>
<keyword id="KW-0696">RNA-directed RNA polymerase</keyword>
<keyword id="KW-0808">Transferase</keyword>
<keyword id="KW-0693">Viral RNA replication</keyword>
<reference key="1">
    <citation type="journal article" date="1990" name="J. Gen. Virol.">
        <title>Homologies between the genomes of a carlavirus (lily symptomless virus) and a potexvirus (lily virus X) from lily plants.</title>
        <authorList>
            <person name="Memelink J."/>
            <person name="van der Vlugt C.I.M."/>
            <person name="Linthorst H.J.M."/>
            <person name="Derks A.F.L.M."/>
            <person name="Asjes C.J."/>
            <person name="Bol J.F."/>
        </authorList>
    </citation>
    <scope>NUCLEOTIDE SEQUENCE [GENOMIC RNA]</scope>
</reference>
<evidence type="ECO:0000305" key="1"/>
<name>RDRP_LVX</name>
<protein>
    <recommendedName>
        <fullName>RNA replication protein</fullName>
    </recommendedName>
    <alternativeName>
        <fullName>ORF 1 protein</fullName>
    </alternativeName>
    <domain>
        <recommendedName>
            <fullName>RNA-directed RNA polymerase</fullName>
            <ecNumber>2.7.7.48</ecNumber>
        </recommendedName>
    </domain>
    <domain>
        <recommendedName>
            <fullName>Helicase</fullName>
            <ecNumber>3.6.4.13</ecNumber>
        </recommendedName>
    </domain>
</protein>
<feature type="chain" id="PRO_0000222550" description="RNA replication protein">
    <location>
        <begin position="1" status="less than"/>
        <end position="162"/>
    </location>
</feature>
<feature type="non-terminal residue">
    <location>
        <position position="1"/>
    </location>
</feature>
<sequence length="162" mass="18045">AIMRMSGEGPTFDANTECAIAYHHTKYQVEQGTAQLYAGDDMAQDTTPILKPSFRLIADRIELKSKEVTHTQVPGEYATFCGWCVTPKGIIKEPRKLFASLQLAKHIGKTAEVKTNYAHDLAHAYRLGDELQDVLTPDEAAFHQATVRDLVTMGGVDFQWHP</sequence>
<accession>P27327</accession>
<organism>
    <name type="scientific">Lily virus X</name>
    <dbReference type="NCBI Taxonomy" id="12194"/>
    <lineage>
        <taxon>Viruses</taxon>
        <taxon>Riboviria</taxon>
        <taxon>Orthornavirae</taxon>
        <taxon>Kitrinoviricota</taxon>
        <taxon>Alsuviricetes</taxon>
        <taxon>Tymovirales</taxon>
        <taxon>Alphaflexiviridae</taxon>
        <taxon>Potexvirus</taxon>
    </lineage>
</organism>